<protein>
    <recommendedName>
        <fullName evidence="1">Exodeoxyribonuclease 7 small subunit</fullName>
        <ecNumber evidence="1">3.1.11.6</ecNumber>
    </recommendedName>
    <alternativeName>
        <fullName evidence="1">Exodeoxyribonuclease VII small subunit</fullName>
        <shortName evidence="1">Exonuclease VII small subunit</shortName>
    </alternativeName>
</protein>
<proteinExistence type="inferred from homology"/>
<sequence>MASKKIDRLSFDATLEELETIVHQLEQGSLPLEEALKQFEQGVHLVRAGQQKLEQAEQKIQILLTQADGTEQAVPFQPEQGEE</sequence>
<name>EX7S_AERS4</name>
<feature type="chain" id="PRO_0000303684" description="Exodeoxyribonuclease 7 small subunit">
    <location>
        <begin position="1"/>
        <end position="83"/>
    </location>
</feature>
<accession>A4SJQ1</accession>
<comment type="function">
    <text evidence="1">Bidirectionally degrades single-stranded DNA into large acid-insoluble oligonucleotides, which are then degraded further into small acid-soluble oligonucleotides.</text>
</comment>
<comment type="catalytic activity">
    <reaction evidence="1">
        <text>Exonucleolytic cleavage in either 5'- to 3'- or 3'- to 5'-direction to yield nucleoside 5'-phosphates.</text>
        <dbReference type="EC" id="3.1.11.6"/>
    </reaction>
</comment>
<comment type="subunit">
    <text evidence="1">Heterooligomer composed of large and small subunits.</text>
</comment>
<comment type="subcellular location">
    <subcellularLocation>
        <location evidence="1">Cytoplasm</location>
    </subcellularLocation>
</comment>
<comment type="similarity">
    <text evidence="1">Belongs to the XseB family.</text>
</comment>
<evidence type="ECO:0000255" key="1">
    <source>
        <dbReference type="HAMAP-Rule" id="MF_00337"/>
    </source>
</evidence>
<gene>
    <name evidence="1" type="primary">xseB</name>
    <name type="ordered locus">ASA_0992</name>
</gene>
<reference key="1">
    <citation type="journal article" date="2008" name="BMC Genomics">
        <title>The genome of Aeromonas salmonicida subsp. salmonicida A449: insights into the evolution of a fish pathogen.</title>
        <authorList>
            <person name="Reith M.E."/>
            <person name="Singh R.K."/>
            <person name="Curtis B."/>
            <person name="Boyd J.M."/>
            <person name="Bouevitch A."/>
            <person name="Kimball J."/>
            <person name="Munholland J."/>
            <person name="Murphy C."/>
            <person name="Sarty D."/>
            <person name="Williams J."/>
            <person name="Nash J.H."/>
            <person name="Johnson S.C."/>
            <person name="Brown L.L."/>
        </authorList>
    </citation>
    <scope>NUCLEOTIDE SEQUENCE [LARGE SCALE GENOMIC DNA]</scope>
    <source>
        <strain>A449</strain>
    </source>
</reference>
<dbReference type="EC" id="3.1.11.6" evidence="1"/>
<dbReference type="EMBL" id="CP000644">
    <property type="protein sequence ID" value="ABO89123.1"/>
    <property type="molecule type" value="Genomic_DNA"/>
</dbReference>
<dbReference type="RefSeq" id="WP_005317577.1">
    <property type="nucleotide sequence ID" value="NC_009348.1"/>
</dbReference>
<dbReference type="SMR" id="A4SJQ1"/>
<dbReference type="STRING" id="29491.GCA_000820065_01192"/>
<dbReference type="GeneID" id="92722223"/>
<dbReference type="KEGG" id="asa:ASA_0992"/>
<dbReference type="eggNOG" id="COG1722">
    <property type="taxonomic scope" value="Bacteria"/>
</dbReference>
<dbReference type="HOGENOM" id="CLU_145918_3_3_6"/>
<dbReference type="Proteomes" id="UP000000225">
    <property type="component" value="Chromosome"/>
</dbReference>
<dbReference type="GO" id="GO:0005829">
    <property type="term" value="C:cytosol"/>
    <property type="evidence" value="ECO:0007669"/>
    <property type="project" value="TreeGrafter"/>
</dbReference>
<dbReference type="GO" id="GO:0009318">
    <property type="term" value="C:exodeoxyribonuclease VII complex"/>
    <property type="evidence" value="ECO:0007669"/>
    <property type="project" value="InterPro"/>
</dbReference>
<dbReference type="GO" id="GO:0008855">
    <property type="term" value="F:exodeoxyribonuclease VII activity"/>
    <property type="evidence" value="ECO:0007669"/>
    <property type="project" value="UniProtKB-UniRule"/>
</dbReference>
<dbReference type="GO" id="GO:0006308">
    <property type="term" value="P:DNA catabolic process"/>
    <property type="evidence" value="ECO:0007669"/>
    <property type="project" value="UniProtKB-UniRule"/>
</dbReference>
<dbReference type="Gene3D" id="1.10.287.1040">
    <property type="entry name" value="Exonuclease VII, small subunit"/>
    <property type="match status" value="1"/>
</dbReference>
<dbReference type="HAMAP" id="MF_00337">
    <property type="entry name" value="Exonuc_7_S"/>
    <property type="match status" value="1"/>
</dbReference>
<dbReference type="InterPro" id="IPR003761">
    <property type="entry name" value="Exonuc_VII_S"/>
</dbReference>
<dbReference type="InterPro" id="IPR037004">
    <property type="entry name" value="Exonuc_VII_ssu_sf"/>
</dbReference>
<dbReference type="NCBIfam" id="NF002137">
    <property type="entry name" value="PRK00977.1-1"/>
    <property type="match status" value="1"/>
</dbReference>
<dbReference type="NCBIfam" id="NF002140">
    <property type="entry name" value="PRK00977.1-4"/>
    <property type="match status" value="1"/>
</dbReference>
<dbReference type="NCBIfam" id="TIGR01280">
    <property type="entry name" value="xseB"/>
    <property type="match status" value="1"/>
</dbReference>
<dbReference type="PANTHER" id="PTHR34137">
    <property type="entry name" value="EXODEOXYRIBONUCLEASE 7 SMALL SUBUNIT"/>
    <property type="match status" value="1"/>
</dbReference>
<dbReference type="PANTHER" id="PTHR34137:SF1">
    <property type="entry name" value="EXODEOXYRIBONUCLEASE 7 SMALL SUBUNIT"/>
    <property type="match status" value="1"/>
</dbReference>
<dbReference type="Pfam" id="PF02609">
    <property type="entry name" value="Exonuc_VII_S"/>
    <property type="match status" value="1"/>
</dbReference>
<dbReference type="PIRSF" id="PIRSF006488">
    <property type="entry name" value="Exonuc_VII_S"/>
    <property type="match status" value="1"/>
</dbReference>
<dbReference type="SUPFAM" id="SSF116842">
    <property type="entry name" value="XseB-like"/>
    <property type="match status" value="1"/>
</dbReference>
<organism>
    <name type="scientific">Aeromonas salmonicida (strain A449)</name>
    <dbReference type="NCBI Taxonomy" id="382245"/>
    <lineage>
        <taxon>Bacteria</taxon>
        <taxon>Pseudomonadati</taxon>
        <taxon>Pseudomonadota</taxon>
        <taxon>Gammaproteobacteria</taxon>
        <taxon>Aeromonadales</taxon>
        <taxon>Aeromonadaceae</taxon>
        <taxon>Aeromonas</taxon>
    </lineage>
</organism>
<keyword id="KW-0963">Cytoplasm</keyword>
<keyword id="KW-0269">Exonuclease</keyword>
<keyword id="KW-0378">Hydrolase</keyword>
<keyword id="KW-0540">Nuclease</keyword>